<reference key="1">
    <citation type="journal article" date="1992" name="Proc. Natl. Acad. Sci. U.S.A.">
        <title>Evolutionary conservation pattern of zinc-finger domains of Drosophila segmentation genes.</title>
        <authorList>
            <person name="Sommer R.J."/>
            <person name="Retzlaff M."/>
            <person name="Goerlich K."/>
            <person name="Sander K."/>
            <person name="Tautz D."/>
        </authorList>
    </citation>
    <scope>NUCLEOTIDE SEQUENCE [GENOMIC DNA]</scope>
</reference>
<accession>Q02027</accession>
<proteinExistence type="inferred from homology"/>
<sequence>IRTHTLPCKCHICGKAFSRPWLLQGHIRTHTGEKPFNCQHCQRAFA</sequence>
<protein>
    <recommendedName>
        <fullName>Escargot/snail protein homolog</fullName>
    </recommendedName>
</protein>
<feature type="chain" id="PRO_0000047046" description="Escargot/snail protein homolog">
    <location>
        <begin position="1" status="less than"/>
        <end position="46" status="greater than"/>
    </location>
</feature>
<feature type="zinc finger region" description="C2H2-type 1" evidence="1">
    <location>
        <begin position="1" status="less than"/>
        <end position="4"/>
    </location>
</feature>
<feature type="zinc finger region" description="C2H2-type 2" evidence="1">
    <location>
        <begin position="8"/>
        <end position="30"/>
    </location>
</feature>
<feature type="zinc finger region" description="C2H2-type 3" evidence="1">
    <location>
        <begin position="36"/>
        <end position="46" status="greater than"/>
    </location>
</feature>
<feature type="non-terminal residue">
    <location>
        <position position="1"/>
    </location>
</feature>
<feature type="non-terminal residue">
    <location>
        <position position="46"/>
    </location>
</feature>
<dbReference type="EMBL" id="L01610">
    <property type="protein sequence ID" value="AAA29800.1"/>
    <property type="molecule type" value="Genomic_DNA"/>
</dbReference>
<dbReference type="SMR" id="Q02027"/>
<dbReference type="GO" id="GO:0005634">
    <property type="term" value="C:nucleus"/>
    <property type="evidence" value="ECO:0007669"/>
    <property type="project" value="UniProtKB-SubCell"/>
</dbReference>
<dbReference type="GO" id="GO:0000981">
    <property type="term" value="F:DNA-binding transcription factor activity, RNA polymerase II-specific"/>
    <property type="evidence" value="ECO:0007669"/>
    <property type="project" value="TreeGrafter"/>
</dbReference>
<dbReference type="GO" id="GO:0000978">
    <property type="term" value="F:RNA polymerase II cis-regulatory region sequence-specific DNA binding"/>
    <property type="evidence" value="ECO:0007669"/>
    <property type="project" value="TreeGrafter"/>
</dbReference>
<dbReference type="GO" id="GO:0008270">
    <property type="term" value="F:zinc ion binding"/>
    <property type="evidence" value="ECO:0007669"/>
    <property type="project" value="UniProtKB-KW"/>
</dbReference>
<dbReference type="FunFam" id="3.30.160.60:FF:000043">
    <property type="entry name" value="Scratch family zinc finger 2"/>
    <property type="match status" value="1"/>
</dbReference>
<dbReference type="Gene3D" id="3.30.160.60">
    <property type="entry name" value="Classic Zinc Finger"/>
    <property type="match status" value="2"/>
</dbReference>
<dbReference type="InterPro" id="IPR050527">
    <property type="entry name" value="Snail/Krueppel_Znf"/>
</dbReference>
<dbReference type="InterPro" id="IPR036236">
    <property type="entry name" value="Znf_C2H2_sf"/>
</dbReference>
<dbReference type="InterPro" id="IPR013087">
    <property type="entry name" value="Znf_C2H2_type"/>
</dbReference>
<dbReference type="PANTHER" id="PTHR24388:SF54">
    <property type="entry name" value="PROTEIN ESCARGOT"/>
    <property type="match status" value="1"/>
</dbReference>
<dbReference type="PANTHER" id="PTHR24388">
    <property type="entry name" value="ZINC FINGER PROTEIN"/>
    <property type="match status" value="1"/>
</dbReference>
<dbReference type="Pfam" id="PF00096">
    <property type="entry name" value="zf-C2H2"/>
    <property type="match status" value="1"/>
</dbReference>
<dbReference type="SMART" id="SM00355">
    <property type="entry name" value="ZnF_C2H2"/>
    <property type="match status" value="1"/>
</dbReference>
<dbReference type="SUPFAM" id="SSF57667">
    <property type="entry name" value="beta-beta-alpha zinc fingers"/>
    <property type="match status" value="1"/>
</dbReference>
<dbReference type="PROSITE" id="PS00028">
    <property type="entry name" value="ZINC_FINGER_C2H2_1"/>
    <property type="match status" value="1"/>
</dbReference>
<dbReference type="PROSITE" id="PS50157">
    <property type="entry name" value="ZINC_FINGER_C2H2_2"/>
    <property type="match status" value="1"/>
</dbReference>
<organism>
    <name type="scientific">Psychoda cinerea</name>
    <name type="common">Psychod fly</name>
    <dbReference type="NCBI Taxonomy" id="7202"/>
    <lineage>
        <taxon>Eukaryota</taxon>
        <taxon>Metazoa</taxon>
        <taxon>Ecdysozoa</taxon>
        <taxon>Arthropoda</taxon>
        <taxon>Hexapoda</taxon>
        <taxon>Insecta</taxon>
        <taxon>Pterygota</taxon>
        <taxon>Neoptera</taxon>
        <taxon>Endopterygota</taxon>
        <taxon>Diptera</taxon>
        <taxon>Nematocera</taxon>
        <taxon>Psychodoidea</taxon>
        <taxon>Psychodidae</taxon>
        <taxon>Psychoda</taxon>
    </lineage>
</organism>
<evidence type="ECO:0000255" key="1">
    <source>
        <dbReference type="PROSITE-ProRule" id="PRU00042"/>
    </source>
</evidence>
<evidence type="ECO:0000305" key="2"/>
<comment type="subcellular location">
    <subcellularLocation>
        <location evidence="2">Nucleus</location>
    </subcellularLocation>
</comment>
<comment type="similarity">
    <text evidence="2">Belongs to the snail C2H2-type zinc-finger protein family.</text>
</comment>
<name>ESCA_PSYCI</name>
<keyword id="KW-0238">DNA-binding</keyword>
<keyword id="KW-0479">Metal-binding</keyword>
<keyword id="KW-0539">Nucleus</keyword>
<keyword id="KW-0677">Repeat</keyword>
<keyword id="KW-0862">Zinc</keyword>
<keyword id="KW-0863">Zinc-finger</keyword>